<dbReference type="EC" id="3.1.1.-"/>
<dbReference type="EMBL" id="AE000516">
    <property type="protein sequence ID" value="AAK46566.1"/>
    <property type="molecule type" value="Genomic_DNA"/>
</dbReference>
<dbReference type="PIR" id="C70776">
    <property type="entry name" value="C70776"/>
</dbReference>
<dbReference type="RefSeq" id="WP_003411484.1">
    <property type="nucleotide sequence ID" value="NZ_KK341227.1"/>
</dbReference>
<dbReference type="SMR" id="P9WHR4"/>
<dbReference type="ESTHER" id="myctu-ym23">
    <property type="family name" value="Tiancimycin-TnmK-Tripeptidase-HIP"/>
</dbReference>
<dbReference type="KEGG" id="mtc:MT2281"/>
<dbReference type="PATRIC" id="fig|83331.31.peg.2455"/>
<dbReference type="HOGENOM" id="CLU_013364_3_1_11"/>
<dbReference type="Proteomes" id="UP000001020">
    <property type="component" value="Chromosome"/>
</dbReference>
<dbReference type="GO" id="GO:0005576">
    <property type="term" value="C:extracellular region"/>
    <property type="evidence" value="ECO:0007669"/>
    <property type="project" value="UniProtKB-SubCell"/>
</dbReference>
<dbReference type="GO" id="GO:0016787">
    <property type="term" value="F:hydrolase activity"/>
    <property type="evidence" value="ECO:0007669"/>
    <property type="project" value="UniProtKB-KW"/>
</dbReference>
<dbReference type="Gene3D" id="3.40.50.1820">
    <property type="entry name" value="alpha/beta hydrolase"/>
    <property type="match status" value="1"/>
</dbReference>
<dbReference type="InterPro" id="IPR000073">
    <property type="entry name" value="AB_hydrolase_1"/>
</dbReference>
<dbReference type="InterPro" id="IPR029058">
    <property type="entry name" value="AB_hydrolase_fold"/>
</dbReference>
<dbReference type="InterPro" id="IPR051601">
    <property type="entry name" value="Serine_prot/Carboxylest_S33"/>
</dbReference>
<dbReference type="PANTHER" id="PTHR43248">
    <property type="entry name" value="2-SUCCINYL-6-HYDROXY-2,4-CYCLOHEXADIENE-1-CARBOXYLATE SYNTHASE"/>
    <property type="match status" value="1"/>
</dbReference>
<dbReference type="PANTHER" id="PTHR43248:SF29">
    <property type="entry name" value="TRIPEPTIDYL AMINOPEPTIDASE"/>
    <property type="match status" value="1"/>
</dbReference>
<dbReference type="Pfam" id="PF00561">
    <property type="entry name" value="Abhydrolase_1"/>
    <property type="match status" value="1"/>
</dbReference>
<dbReference type="SUPFAM" id="SSF53474">
    <property type="entry name" value="alpha/beta-Hydrolases"/>
    <property type="match status" value="1"/>
</dbReference>
<gene>
    <name evidence="3" type="primary">caeB</name>
    <name type="ordered locus">MT2281</name>
</gene>
<organism>
    <name type="scientific">Mycobacterium tuberculosis (strain CDC 1551 / Oshkosh)</name>
    <dbReference type="NCBI Taxonomy" id="83331"/>
    <lineage>
        <taxon>Bacteria</taxon>
        <taxon>Bacillati</taxon>
        <taxon>Actinomycetota</taxon>
        <taxon>Actinomycetes</taxon>
        <taxon>Mycobacteriales</taxon>
        <taxon>Mycobacteriaceae</taxon>
        <taxon>Mycobacterium</taxon>
        <taxon>Mycobacterium tuberculosis complex</taxon>
    </lineage>
</organism>
<keyword id="KW-0378">Hydrolase</keyword>
<keyword id="KW-1185">Reference proteome</keyword>
<keyword id="KW-0964">Secreted</keyword>
<keyword id="KW-0732">Signal</keyword>
<comment type="subcellular location">
    <subcellularLocation>
        <location evidence="5">Secreted</location>
    </subcellularLocation>
</comment>
<comment type="similarity">
    <text evidence="4">Belongs to the peptidase S33 family.</text>
</comment>
<proteinExistence type="inferred from homology"/>
<evidence type="ECO:0000250" key="1">
    <source>
        <dbReference type="UniProtKB" id="P9WHR3"/>
    </source>
</evidence>
<evidence type="ECO:0000255" key="2"/>
<evidence type="ECO:0000303" key="3">
    <source>
    </source>
</evidence>
<evidence type="ECO:0000305" key="4"/>
<evidence type="ECO:0000305" key="5">
    <source>
    </source>
</evidence>
<sequence>MAAMWRRRPLSSALLSFGLLLGGLPLAAPPLAGATEEPGAGQTPGAPVVAPQQSWNSCREFIADTSEIRTARCATVSVPVDYDQPGGTQAKLAVIRVPATGQRFGALLVNPGGPGASAVDMVAAMAPAIADTDILRHFDLVGFDPRGVGHSTPALRCRTDAEFDAYRRDPMADYSPAGVTHVEQVYRQLAQDCVDRMGFSFLANIGTASVARDMDMVRQALGDDQINYLGYSYGTELGTAYLERFGTHVRAMVLDGAIDPAVSPIEESISQMAGFQTAFNDYAADCARSPACPLGTDSAQWVNRYHALVDPLVQKPGKTSDPRGLSYADATTGTINALYSPQRWKYLTSGLLGLQRGSDAGDLLVLADDYDGRDADGHYSNDQDAFNAVRCVDAPTPADPAAWVAADQRIRQVAPFLSYGQFTGSAPRDLCALWPVPATSTPHPAAPAGAGKVVVVSTTHDPATPYQSGVDLARQLGAPLITFDGTQHTAVFDGNQCVDSAVMHYFLDGTLPPTSLRCAP</sequence>
<name>CAEB_MYCTO</name>
<protein>
    <recommendedName>
        <fullName evidence="3">Carboxylesterase B</fullName>
        <ecNumber>3.1.1.-</ecNumber>
    </recommendedName>
</protein>
<reference key="1">
    <citation type="journal article" date="2002" name="J. Bacteriol.">
        <title>Whole-genome comparison of Mycobacterium tuberculosis clinical and laboratory strains.</title>
        <authorList>
            <person name="Fleischmann R.D."/>
            <person name="Alland D."/>
            <person name="Eisen J.A."/>
            <person name="Carpenter L."/>
            <person name="White O."/>
            <person name="Peterson J.D."/>
            <person name="DeBoy R.T."/>
            <person name="Dodson R.J."/>
            <person name="Gwinn M.L."/>
            <person name="Haft D.H."/>
            <person name="Hickey E.K."/>
            <person name="Kolonay J.F."/>
            <person name="Nelson W.C."/>
            <person name="Umayam L.A."/>
            <person name="Ermolaeva M.D."/>
            <person name="Salzberg S.L."/>
            <person name="Delcher A."/>
            <person name="Utterback T.R."/>
            <person name="Weidman J.F."/>
            <person name="Khouri H.M."/>
            <person name="Gill J."/>
            <person name="Mikula A."/>
            <person name="Bishai W."/>
            <person name="Jacobs W.R. Jr."/>
            <person name="Venter J.C."/>
            <person name="Fraser C.M."/>
        </authorList>
    </citation>
    <scope>NUCLEOTIDE SEQUENCE [LARGE SCALE GENOMIC DNA]</scope>
    <source>
        <strain>CDC 1551 / Oshkosh</strain>
    </source>
</reference>
<reference key="2">
    <citation type="journal article" date="2007" name="J. Biol. Chem.">
        <title>Characterization of a novel cell wall-anchored protein with carboxylesterase activity required for virulence in Mycobacterium tuberculosis.</title>
        <authorList>
            <person name="Lun S."/>
            <person name="Bishai W.R."/>
        </authorList>
    </citation>
    <scope>SUBCELLULAR LOCATION</scope>
    <scope>NOMENCLATURE</scope>
</reference>
<feature type="signal peptide" evidence="2">
    <location>
        <begin position="1"/>
        <end position="34"/>
    </location>
</feature>
<feature type="chain" id="PRO_0000428137" description="Carboxylesterase B">
    <location>
        <begin position="35"/>
        <end position="520"/>
    </location>
</feature>
<feature type="domain" description="AB hydrolase-1" evidence="2">
    <location>
        <begin position="105"/>
        <end position="403"/>
    </location>
</feature>
<feature type="active site" description="Nucleophile" evidence="1">
    <location>
        <position position="232"/>
    </location>
</feature>
<feature type="active site" evidence="1">
    <location>
        <position position="461"/>
    </location>
</feature>
<feature type="active site" description="Proton donor" evidence="1">
    <location>
        <position position="488"/>
    </location>
</feature>
<accession>P9WHR4</accession>
<accession>L0TBV4</accession>
<accession>P65821</accession>
<accession>Q10508</accession>